<keyword id="KW-0963">Cytoplasm</keyword>
<keyword id="KW-0489">Methyltransferase</keyword>
<keyword id="KW-1185">Reference proteome</keyword>
<keyword id="KW-0949">S-adenosyl-L-methionine</keyword>
<keyword id="KW-0808">Transferase</keyword>
<keyword id="KW-0819">tRNA processing</keyword>
<name>TRMD_ANADE</name>
<reference key="1">
    <citation type="submission" date="2006-01" db="EMBL/GenBank/DDBJ databases">
        <title>Complete sequence of Anaeromyxobacter dehalogenans 2CP-C.</title>
        <authorList>
            <person name="Copeland A."/>
            <person name="Lucas S."/>
            <person name="Lapidus A."/>
            <person name="Barry K."/>
            <person name="Detter J.C."/>
            <person name="Glavina T."/>
            <person name="Hammon N."/>
            <person name="Israni S."/>
            <person name="Pitluck S."/>
            <person name="Brettin T."/>
            <person name="Bruce D."/>
            <person name="Han C."/>
            <person name="Tapia R."/>
            <person name="Gilna P."/>
            <person name="Kiss H."/>
            <person name="Schmutz J."/>
            <person name="Larimer F."/>
            <person name="Land M."/>
            <person name="Kyrpides N."/>
            <person name="Anderson I."/>
            <person name="Sanford R.A."/>
            <person name="Ritalahti K.M."/>
            <person name="Thomas H.S."/>
            <person name="Kirby J.R."/>
            <person name="Zhulin I.B."/>
            <person name="Loeffler F.E."/>
            <person name="Richardson P."/>
        </authorList>
    </citation>
    <scope>NUCLEOTIDE SEQUENCE [LARGE SCALE GENOMIC DNA]</scope>
    <source>
        <strain>2CP-C</strain>
    </source>
</reference>
<gene>
    <name evidence="1" type="primary">trmD</name>
    <name type="ordered locus">Adeh_1913</name>
</gene>
<feature type="chain" id="PRO_0000257388" description="tRNA (guanine-N(1)-)-methyltransferase">
    <location>
        <begin position="1"/>
        <end position="247"/>
    </location>
</feature>
<feature type="binding site" evidence="1">
    <location>
        <position position="115"/>
    </location>
    <ligand>
        <name>S-adenosyl-L-methionine</name>
        <dbReference type="ChEBI" id="CHEBI:59789"/>
    </ligand>
</feature>
<feature type="binding site" evidence="1">
    <location>
        <begin position="134"/>
        <end position="139"/>
    </location>
    <ligand>
        <name>S-adenosyl-L-methionine</name>
        <dbReference type="ChEBI" id="CHEBI:59789"/>
    </ligand>
</feature>
<dbReference type="EC" id="2.1.1.228" evidence="1"/>
<dbReference type="EMBL" id="CP000251">
    <property type="protein sequence ID" value="ABC81684.1"/>
    <property type="molecule type" value="Genomic_DNA"/>
</dbReference>
<dbReference type="RefSeq" id="WP_011420967.1">
    <property type="nucleotide sequence ID" value="NC_007760.1"/>
</dbReference>
<dbReference type="SMR" id="Q2IJ54"/>
<dbReference type="STRING" id="290397.Adeh_1913"/>
<dbReference type="KEGG" id="ade:Adeh_1913"/>
<dbReference type="eggNOG" id="COG0336">
    <property type="taxonomic scope" value="Bacteria"/>
</dbReference>
<dbReference type="HOGENOM" id="CLU_047363_0_1_7"/>
<dbReference type="OrthoDB" id="9807416at2"/>
<dbReference type="Proteomes" id="UP000001935">
    <property type="component" value="Chromosome"/>
</dbReference>
<dbReference type="GO" id="GO:0005829">
    <property type="term" value="C:cytosol"/>
    <property type="evidence" value="ECO:0007669"/>
    <property type="project" value="TreeGrafter"/>
</dbReference>
<dbReference type="GO" id="GO:0052906">
    <property type="term" value="F:tRNA (guanine(37)-N1)-methyltransferase activity"/>
    <property type="evidence" value="ECO:0007669"/>
    <property type="project" value="UniProtKB-UniRule"/>
</dbReference>
<dbReference type="GO" id="GO:0002939">
    <property type="term" value="P:tRNA N1-guanine methylation"/>
    <property type="evidence" value="ECO:0007669"/>
    <property type="project" value="TreeGrafter"/>
</dbReference>
<dbReference type="CDD" id="cd18080">
    <property type="entry name" value="TrmD-like"/>
    <property type="match status" value="1"/>
</dbReference>
<dbReference type="FunFam" id="1.10.1270.20:FF:000001">
    <property type="entry name" value="tRNA (guanine-N(1)-)-methyltransferase"/>
    <property type="match status" value="1"/>
</dbReference>
<dbReference type="FunFam" id="3.40.1280.10:FF:000001">
    <property type="entry name" value="tRNA (guanine-N(1)-)-methyltransferase"/>
    <property type="match status" value="1"/>
</dbReference>
<dbReference type="Gene3D" id="3.40.1280.10">
    <property type="match status" value="1"/>
</dbReference>
<dbReference type="Gene3D" id="1.10.1270.20">
    <property type="entry name" value="tRNA(m1g37)methyltransferase, domain 2"/>
    <property type="match status" value="1"/>
</dbReference>
<dbReference type="HAMAP" id="MF_00605">
    <property type="entry name" value="TrmD"/>
    <property type="match status" value="1"/>
</dbReference>
<dbReference type="InterPro" id="IPR029028">
    <property type="entry name" value="Alpha/beta_knot_MTases"/>
</dbReference>
<dbReference type="InterPro" id="IPR023148">
    <property type="entry name" value="tRNA_m1G_MeTrfase_C_sf"/>
</dbReference>
<dbReference type="InterPro" id="IPR002649">
    <property type="entry name" value="tRNA_m1G_MeTrfase_TrmD"/>
</dbReference>
<dbReference type="InterPro" id="IPR029026">
    <property type="entry name" value="tRNA_m1G_MTases_N"/>
</dbReference>
<dbReference type="InterPro" id="IPR016009">
    <property type="entry name" value="tRNA_MeTrfase_TRMD/TRM10"/>
</dbReference>
<dbReference type="NCBIfam" id="NF000648">
    <property type="entry name" value="PRK00026.1"/>
    <property type="match status" value="1"/>
</dbReference>
<dbReference type="NCBIfam" id="TIGR00088">
    <property type="entry name" value="trmD"/>
    <property type="match status" value="1"/>
</dbReference>
<dbReference type="PANTHER" id="PTHR46417">
    <property type="entry name" value="TRNA (GUANINE-N(1)-)-METHYLTRANSFERASE"/>
    <property type="match status" value="1"/>
</dbReference>
<dbReference type="PANTHER" id="PTHR46417:SF1">
    <property type="entry name" value="TRNA (GUANINE-N(1)-)-METHYLTRANSFERASE"/>
    <property type="match status" value="1"/>
</dbReference>
<dbReference type="Pfam" id="PF01746">
    <property type="entry name" value="tRNA_m1G_MT"/>
    <property type="match status" value="1"/>
</dbReference>
<dbReference type="PIRSF" id="PIRSF000386">
    <property type="entry name" value="tRNA_mtase"/>
    <property type="match status" value="1"/>
</dbReference>
<dbReference type="SUPFAM" id="SSF75217">
    <property type="entry name" value="alpha/beta knot"/>
    <property type="match status" value="1"/>
</dbReference>
<accession>Q2IJ54</accession>
<evidence type="ECO:0000255" key="1">
    <source>
        <dbReference type="HAMAP-Rule" id="MF_00605"/>
    </source>
</evidence>
<protein>
    <recommendedName>
        <fullName evidence="1">tRNA (guanine-N(1)-)-methyltransferase</fullName>
        <ecNumber evidence="1">2.1.1.228</ecNumber>
    </recommendedName>
    <alternativeName>
        <fullName evidence="1">M1G-methyltransferase</fullName>
    </alternativeName>
    <alternativeName>
        <fullName evidence="1">tRNA [GM37] methyltransferase</fullName>
    </alternativeName>
</protein>
<proteinExistence type="inferred from homology"/>
<sequence>MARLEVDILTLFPRMCAGYLGESILGKAQEAGLLAATITDIRDHATGKHRVCDDAPYGGGAGMVMKPEPLVEAIEAARARLPGAWVVLTSPRGARLDQALARRFAEHGRLILACGRYEGVDERVMTAVDMQVSIGDFVLTGGELAALCVVDAAARLVPGVLGNAASADAESFAGAEGLLEYPQYTRPPEFRGMRVPEVLLSGDHRRIERWRRREALRATRERRPDLFTRVSLPESDLRLIDAGDDEL</sequence>
<comment type="function">
    <text evidence="1">Specifically methylates guanosine-37 in various tRNAs.</text>
</comment>
<comment type="catalytic activity">
    <reaction evidence="1">
        <text>guanosine(37) in tRNA + S-adenosyl-L-methionine = N(1)-methylguanosine(37) in tRNA + S-adenosyl-L-homocysteine + H(+)</text>
        <dbReference type="Rhea" id="RHEA:36899"/>
        <dbReference type="Rhea" id="RHEA-COMP:10145"/>
        <dbReference type="Rhea" id="RHEA-COMP:10147"/>
        <dbReference type="ChEBI" id="CHEBI:15378"/>
        <dbReference type="ChEBI" id="CHEBI:57856"/>
        <dbReference type="ChEBI" id="CHEBI:59789"/>
        <dbReference type="ChEBI" id="CHEBI:73542"/>
        <dbReference type="ChEBI" id="CHEBI:74269"/>
        <dbReference type="EC" id="2.1.1.228"/>
    </reaction>
</comment>
<comment type="subunit">
    <text evidence="1">Homodimer.</text>
</comment>
<comment type="subcellular location">
    <subcellularLocation>
        <location evidence="1">Cytoplasm</location>
    </subcellularLocation>
</comment>
<comment type="similarity">
    <text evidence="1">Belongs to the RNA methyltransferase TrmD family.</text>
</comment>
<organism>
    <name type="scientific">Anaeromyxobacter dehalogenans (strain 2CP-C)</name>
    <dbReference type="NCBI Taxonomy" id="290397"/>
    <lineage>
        <taxon>Bacteria</taxon>
        <taxon>Pseudomonadati</taxon>
        <taxon>Myxococcota</taxon>
        <taxon>Myxococcia</taxon>
        <taxon>Myxococcales</taxon>
        <taxon>Cystobacterineae</taxon>
        <taxon>Anaeromyxobacteraceae</taxon>
        <taxon>Anaeromyxobacter</taxon>
    </lineage>
</organism>